<keyword id="KW-0560">Oxidoreductase</keyword>
<keyword id="KW-1185">Reference proteome</keyword>
<keyword id="KW-0819">tRNA processing</keyword>
<name>TRHO_STAA8</name>
<evidence type="ECO:0000255" key="1">
    <source>
        <dbReference type="HAMAP-Rule" id="MF_00469"/>
    </source>
</evidence>
<proteinExistence type="inferred from homology"/>
<reference key="1">
    <citation type="book" date="2006" name="Gram positive pathogens, 2nd edition">
        <title>The Staphylococcus aureus NCTC 8325 genome.</title>
        <editorList>
            <person name="Fischetti V."/>
            <person name="Novick R."/>
            <person name="Ferretti J."/>
            <person name="Portnoy D."/>
            <person name="Rood J."/>
        </editorList>
        <authorList>
            <person name="Gillaspy A.F."/>
            <person name="Worrell V."/>
            <person name="Orvis J."/>
            <person name="Roe B.A."/>
            <person name="Dyer D.W."/>
            <person name="Iandolo J.J."/>
        </authorList>
    </citation>
    <scope>NUCLEOTIDE SEQUENCE [LARGE SCALE GENOMIC DNA]</scope>
    <source>
        <strain>NCTC 8325 / PS 47</strain>
    </source>
</reference>
<dbReference type="EC" id="1.14.-.-" evidence="1"/>
<dbReference type="EMBL" id="CP000253">
    <property type="protein sequence ID" value="ABD32010.1"/>
    <property type="molecule type" value="Genomic_DNA"/>
</dbReference>
<dbReference type="RefSeq" id="WP_001109273.1">
    <property type="nucleotide sequence ID" value="NZ_LS483365.1"/>
</dbReference>
<dbReference type="RefSeq" id="YP_501473.1">
    <property type="nucleotide sequence ID" value="NC_007795.1"/>
</dbReference>
<dbReference type="SMR" id="Q2FUS7"/>
<dbReference type="STRING" id="93061.SAOUHSC_03024"/>
<dbReference type="PaxDb" id="1280-SAXN108_2963"/>
<dbReference type="GeneID" id="3921291"/>
<dbReference type="KEGG" id="sao:SAOUHSC_03024"/>
<dbReference type="PATRIC" id="fig|93061.5.peg.2732"/>
<dbReference type="eggNOG" id="COG1054">
    <property type="taxonomic scope" value="Bacteria"/>
</dbReference>
<dbReference type="HOGENOM" id="CLU_038878_1_0_9"/>
<dbReference type="OrthoDB" id="9778326at2"/>
<dbReference type="PRO" id="PR:Q2FUS7"/>
<dbReference type="Proteomes" id="UP000008816">
    <property type="component" value="Chromosome"/>
</dbReference>
<dbReference type="GO" id="GO:0016705">
    <property type="term" value="F:oxidoreductase activity, acting on paired donors, with incorporation or reduction of molecular oxygen"/>
    <property type="evidence" value="ECO:0007669"/>
    <property type="project" value="UniProtKB-UniRule"/>
</dbReference>
<dbReference type="GO" id="GO:0006400">
    <property type="term" value="P:tRNA modification"/>
    <property type="evidence" value="ECO:0007669"/>
    <property type="project" value="UniProtKB-UniRule"/>
</dbReference>
<dbReference type="CDD" id="cd01518">
    <property type="entry name" value="RHOD_YceA"/>
    <property type="match status" value="1"/>
</dbReference>
<dbReference type="Gene3D" id="3.30.70.100">
    <property type="match status" value="1"/>
</dbReference>
<dbReference type="Gene3D" id="3.40.250.10">
    <property type="entry name" value="Rhodanese-like domain"/>
    <property type="match status" value="1"/>
</dbReference>
<dbReference type="HAMAP" id="MF_00469">
    <property type="entry name" value="TrhO"/>
    <property type="match status" value="1"/>
</dbReference>
<dbReference type="InterPro" id="IPR001763">
    <property type="entry name" value="Rhodanese-like_dom"/>
</dbReference>
<dbReference type="InterPro" id="IPR036873">
    <property type="entry name" value="Rhodanese-like_dom_sf"/>
</dbReference>
<dbReference type="InterPro" id="IPR022111">
    <property type="entry name" value="Rhodanese_C"/>
</dbReference>
<dbReference type="InterPro" id="IPR020936">
    <property type="entry name" value="TrhO"/>
</dbReference>
<dbReference type="InterPro" id="IPR040503">
    <property type="entry name" value="TRHO_N"/>
</dbReference>
<dbReference type="NCBIfam" id="NF001135">
    <property type="entry name" value="PRK00142.1-3"/>
    <property type="match status" value="1"/>
</dbReference>
<dbReference type="PANTHER" id="PTHR43268:SF3">
    <property type="entry name" value="RHODANESE-LIKE DOMAIN-CONTAINING PROTEIN 7-RELATED"/>
    <property type="match status" value="1"/>
</dbReference>
<dbReference type="PANTHER" id="PTHR43268">
    <property type="entry name" value="THIOSULFATE SULFURTRANSFERASE/RHODANESE-LIKE DOMAIN-CONTAINING PROTEIN 2"/>
    <property type="match status" value="1"/>
</dbReference>
<dbReference type="Pfam" id="PF00581">
    <property type="entry name" value="Rhodanese"/>
    <property type="match status" value="1"/>
</dbReference>
<dbReference type="Pfam" id="PF12368">
    <property type="entry name" value="Rhodanese_C"/>
    <property type="match status" value="1"/>
</dbReference>
<dbReference type="Pfam" id="PF17773">
    <property type="entry name" value="UPF0176_N"/>
    <property type="match status" value="1"/>
</dbReference>
<dbReference type="SMART" id="SM00450">
    <property type="entry name" value="RHOD"/>
    <property type="match status" value="1"/>
</dbReference>
<dbReference type="SUPFAM" id="SSF52821">
    <property type="entry name" value="Rhodanese/Cell cycle control phosphatase"/>
    <property type="match status" value="1"/>
</dbReference>
<dbReference type="PROSITE" id="PS50206">
    <property type="entry name" value="RHODANESE_3"/>
    <property type="match status" value="1"/>
</dbReference>
<gene>
    <name evidence="1" type="primary">trhO</name>
    <name type="ordered locus">SAOUHSC_03024</name>
</gene>
<sequence length="318" mass="37058">MNYQVLLYYKYMTIDDPEQFAQDHLAFCKAHHLKGRILVSTEGINGTLSGTKEETEQYMAHMHADERFKDMVFKIDEAEGHAFKKMHVRPRKEIVALDLEDDVDPRHTTGQYLSPVEFRKALEDDDTVIIDARNDYEFDLGHFRGAIRPNITRFRDLPDWIKENKALFADKKVVTYCTGGIRCEKFSGWLLKEGFEDVAQLHGGIATYGKDPETKGEYWDGKMYVFDDRISVDINQVEKTIIGKDWFDGKPCERYINCANPECNKQILVSEENETKYLGACSYECAKHERNRYVQANNISDNEWQQRLTNFDDLHQHA</sequence>
<comment type="function">
    <text evidence="1">Catalyzes oxygen-dependent 5-hydroxyuridine (ho5U) modification at position 34 in tRNAs.</text>
</comment>
<comment type="catalytic activity">
    <reaction evidence="1">
        <text>uridine(34) in tRNA + AH2 + O2 = 5-hydroxyuridine(34) in tRNA + A + H2O</text>
        <dbReference type="Rhea" id="RHEA:64224"/>
        <dbReference type="Rhea" id="RHEA-COMP:11727"/>
        <dbReference type="Rhea" id="RHEA-COMP:13381"/>
        <dbReference type="ChEBI" id="CHEBI:13193"/>
        <dbReference type="ChEBI" id="CHEBI:15377"/>
        <dbReference type="ChEBI" id="CHEBI:15379"/>
        <dbReference type="ChEBI" id="CHEBI:17499"/>
        <dbReference type="ChEBI" id="CHEBI:65315"/>
        <dbReference type="ChEBI" id="CHEBI:136877"/>
    </reaction>
</comment>
<comment type="similarity">
    <text evidence="1">Belongs to the TrhO family.</text>
</comment>
<organism>
    <name type="scientific">Staphylococcus aureus (strain NCTC 8325 / PS 47)</name>
    <dbReference type="NCBI Taxonomy" id="93061"/>
    <lineage>
        <taxon>Bacteria</taxon>
        <taxon>Bacillati</taxon>
        <taxon>Bacillota</taxon>
        <taxon>Bacilli</taxon>
        <taxon>Bacillales</taxon>
        <taxon>Staphylococcaceae</taxon>
        <taxon>Staphylococcus</taxon>
    </lineage>
</organism>
<accession>Q2FUS7</accession>
<feature type="chain" id="PRO_1000013782" description="tRNA uridine(34) hydroxylase">
    <location>
        <begin position="1"/>
        <end position="318"/>
    </location>
</feature>
<feature type="domain" description="Rhodanese" evidence="1">
    <location>
        <begin position="123"/>
        <end position="217"/>
    </location>
</feature>
<feature type="active site" description="Cysteine persulfide intermediate" evidence="1">
    <location>
        <position position="177"/>
    </location>
</feature>
<protein>
    <recommendedName>
        <fullName evidence="1">tRNA uridine(34) hydroxylase</fullName>
        <ecNumber evidence="1">1.14.-.-</ecNumber>
    </recommendedName>
    <alternativeName>
        <fullName evidence="1">tRNA hydroxylation protein O</fullName>
    </alternativeName>
</protein>